<accession>Q0VMA1</accession>
<comment type="catalytic activity">
    <reaction evidence="1">
        <text>1-(5-phospho-beta-D-ribosyl)-ATP + H2O = 1-(5-phospho-beta-D-ribosyl)-5'-AMP + diphosphate + H(+)</text>
        <dbReference type="Rhea" id="RHEA:22828"/>
        <dbReference type="ChEBI" id="CHEBI:15377"/>
        <dbReference type="ChEBI" id="CHEBI:15378"/>
        <dbReference type="ChEBI" id="CHEBI:33019"/>
        <dbReference type="ChEBI" id="CHEBI:59457"/>
        <dbReference type="ChEBI" id="CHEBI:73183"/>
        <dbReference type="EC" id="3.6.1.31"/>
    </reaction>
</comment>
<comment type="pathway">
    <text evidence="1">Amino-acid biosynthesis; L-histidine biosynthesis; L-histidine from 5-phospho-alpha-D-ribose 1-diphosphate: step 2/9.</text>
</comment>
<comment type="subcellular location">
    <subcellularLocation>
        <location evidence="1">Cytoplasm</location>
    </subcellularLocation>
</comment>
<comment type="similarity">
    <text evidence="1">Belongs to the PRA-PH family.</text>
</comment>
<name>HIS2_ALCBS</name>
<feature type="chain" id="PRO_1000063320" description="Phosphoribosyl-ATP pyrophosphatase">
    <location>
        <begin position="1"/>
        <end position="111"/>
    </location>
</feature>
<gene>
    <name evidence="1" type="primary">hisE</name>
    <name type="ordered locus">ABO_2249</name>
</gene>
<reference key="1">
    <citation type="journal article" date="2006" name="Nat. Biotechnol.">
        <title>Genome sequence of the ubiquitous hydrocarbon-degrading marine bacterium Alcanivorax borkumensis.</title>
        <authorList>
            <person name="Schneiker S."/>
            <person name="Martins dos Santos V.A.P."/>
            <person name="Bartels D."/>
            <person name="Bekel T."/>
            <person name="Brecht M."/>
            <person name="Buhrmester J."/>
            <person name="Chernikova T.N."/>
            <person name="Denaro R."/>
            <person name="Ferrer M."/>
            <person name="Gertler C."/>
            <person name="Goesmann A."/>
            <person name="Golyshina O.V."/>
            <person name="Kaminski F."/>
            <person name="Khachane A.N."/>
            <person name="Lang S."/>
            <person name="Linke B."/>
            <person name="McHardy A.C."/>
            <person name="Meyer F."/>
            <person name="Nechitaylo T."/>
            <person name="Puehler A."/>
            <person name="Regenhardt D."/>
            <person name="Rupp O."/>
            <person name="Sabirova J.S."/>
            <person name="Selbitschka W."/>
            <person name="Yakimov M.M."/>
            <person name="Timmis K.N."/>
            <person name="Vorhoelter F.-J."/>
            <person name="Weidner S."/>
            <person name="Kaiser O."/>
            <person name="Golyshin P.N."/>
        </authorList>
    </citation>
    <scope>NUCLEOTIDE SEQUENCE [LARGE SCALE GENOMIC DNA]</scope>
    <source>
        <strain>ATCC 700651 / DSM 11573 / NCIMB 13689 / SK2</strain>
    </source>
</reference>
<proteinExistence type="inferred from homology"/>
<evidence type="ECO:0000255" key="1">
    <source>
        <dbReference type="HAMAP-Rule" id="MF_01020"/>
    </source>
</evidence>
<keyword id="KW-0028">Amino-acid biosynthesis</keyword>
<keyword id="KW-0067">ATP-binding</keyword>
<keyword id="KW-0963">Cytoplasm</keyword>
<keyword id="KW-0368">Histidine biosynthesis</keyword>
<keyword id="KW-0378">Hydrolase</keyword>
<keyword id="KW-0547">Nucleotide-binding</keyword>
<keyword id="KW-1185">Reference proteome</keyword>
<organism>
    <name type="scientific">Alcanivorax borkumensis (strain ATCC 700651 / DSM 11573 / NCIMB 13689 / SK2)</name>
    <dbReference type="NCBI Taxonomy" id="393595"/>
    <lineage>
        <taxon>Bacteria</taxon>
        <taxon>Pseudomonadati</taxon>
        <taxon>Pseudomonadota</taxon>
        <taxon>Gammaproteobacteria</taxon>
        <taxon>Oceanospirillales</taxon>
        <taxon>Alcanivoracaceae</taxon>
        <taxon>Alcanivorax</taxon>
    </lineage>
</organism>
<dbReference type="EC" id="3.6.1.31" evidence="1"/>
<dbReference type="EMBL" id="AM286690">
    <property type="protein sequence ID" value="CAL17697.1"/>
    <property type="molecule type" value="Genomic_DNA"/>
</dbReference>
<dbReference type="RefSeq" id="WP_011589524.1">
    <property type="nucleotide sequence ID" value="NC_008260.1"/>
</dbReference>
<dbReference type="SMR" id="Q0VMA1"/>
<dbReference type="STRING" id="393595.ABO_2249"/>
<dbReference type="KEGG" id="abo:ABO_2249"/>
<dbReference type="eggNOG" id="COG0140">
    <property type="taxonomic scope" value="Bacteria"/>
</dbReference>
<dbReference type="HOGENOM" id="CLU_123337_1_2_6"/>
<dbReference type="OrthoDB" id="9814738at2"/>
<dbReference type="UniPathway" id="UPA00031">
    <property type="reaction ID" value="UER00007"/>
</dbReference>
<dbReference type="Proteomes" id="UP000008871">
    <property type="component" value="Chromosome"/>
</dbReference>
<dbReference type="GO" id="GO:0005737">
    <property type="term" value="C:cytoplasm"/>
    <property type="evidence" value="ECO:0007669"/>
    <property type="project" value="UniProtKB-SubCell"/>
</dbReference>
<dbReference type="GO" id="GO:0005524">
    <property type="term" value="F:ATP binding"/>
    <property type="evidence" value="ECO:0007669"/>
    <property type="project" value="UniProtKB-KW"/>
</dbReference>
<dbReference type="GO" id="GO:0004636">
    <property type="term" value="F:phosphoribosyl-ATP diphosphatase activity"/>
    <property type="evidence" value="ECO:0007669"/>
    <property type="project" value="UniProtKB-UniRule"/>
</dbReference>
<dbReference type="GO" id="GO:0000105">
    <property type="term" value="P:L-histidine biosynthetic process"/>
    <property type="evidence" value="ECO:0007669"/>
    <property type="project" value="UniProtKB-UniRule"/>
</dbReference>
<dbReference type="CDD" id="cd11534">
    <property type="entry name" value="NTP-PPase_HisIE_like"/>
    <property type="match status" value="1"/>
</dbReference>
<dbReference type="Gene3D" id="1.10.287.1080">
    <property type="entry name" value="MazG-like"/>
    <property type="match status" value="1"/>
</dbReference>
<dbReference type="HAMAP" id="MF_01020">
    <property type="entry name" value="HisE"/>
    <property type="match status" value="1"/>
</dbReference>
<dbReference type="InterPro" id="IPR008179">
    <property type="entry name" value="HisE"/>
</dbReference>
<dbReference type="InterPro" id="IPR021130">
    <property type="entry name" value="PRib-ATP_PPHydrolase-like"/>
</dbReference>
<dbReference type="NCBIfam" id="TIGR03188">
    <property type="entry name" value="histidine_hisI"/>
    <property type="match status" value="1"/>
</dbReference>
<dbReference type="NCBIfam" id="NF001611">
    <property type="entry name" value="PRK00400.1-3"/>
    <property type="match status" value="1"/>
</dbReference>
<dbReference type="PANTHER" id="PTHR42945">
    <property type="entry name" value="HISTIDINE BIOSYNTHESIS BIFUNCTIONAL PROTEIN"/>
    <property type="match status" value="1"/>
</dbReference>
<dbReference type="PANTHER" id="PTHR42945:SF9">
    <property type="entry name" value="HISTIDINE BIOSYNTHESIS BIFUNCTIONAL PROTEIN HISIE"/>
    <property type="match status" value="1"/>
</dbReference>
<dbReference type="Pfam" id="PF01503">
    <property type="entry name" value="PRA-PH"/>
    <property type="match status" value="1"/>
</dbReference>
<dbReference type="SUPFAM" id="SSF101386">
    <property type="entry name" value="all-alpha NTP pyrophosphatases"/>
    <property type="match status" value="1"/>
</dbReference>
<protein>
    <recommendedName>
        <fullName evidence="1">Phosphoribosyl-ATP pyrophosphatase</fullName>
        <shortName evidence="1">PRA-PH</shortName>
        <ecNumber evidence="1">3.6.1.31</ecNumber>
    </recommendedName>
</protein>
<sequence length="111" mass="12162">MSDILSELHQVLESRKGANPDSSYVASLYAKGLNKILEKVGEEAIETILAARDAEVSGEHQALISETADLWFHSLVMLAKLGEHPDKVLAELQRRFGLSGHDEKAARSGKH</sequence>